<proteinExistence type="inferred from homology"/>
<evidence type="ECO:0000255" key="1">
    <source>
        <dbReference type="HAMAP-Rule" id="MF_00344"/>
    </source>
</evidence>
<keyword id="KW-0067">ATP-binding</keyword>
<keyword id="KW-0315">Glutamine amidotransferase</keyword>
<keyword id="KW-0332">GMP biosynthesis</keyword>
<keyword id="KW-0436">Ligase</keyword>
<keyword id="KW-0547">Nucleotide-binding</keyword>
<keyword id="KW-0658">Purine biosynthesis</keyword>
<keyword id="KW-1185">Reference proteome</keyword>
<sequence>MSNIHEHKILILDFGSQYTQLIARRIREIGVYCELWAWDVTEAQIREFAPNGIVLAGGPESVTEDNSPRAPEYVFDAGVPVLGICYGMQTMSEQLGGKVIQGVGEREFGYAQVEVLTDSALLRHIEDGISDAGKPVLDVWMSHGDKVSAIPEGFVAVAKTETCPFAVMANEDKKFYGVQFHPEVTHTRQGKRMLEHFVMDICGCDNKWQPASIIEDAVERIKAQVGDDEVILGLSGGVDSSVTAMLLHRAIGERLTCVFVDNGLLRLNEAKQVLEMFGDHFGLNIVHVDAENRFLEALKGENDPEAKRKIIGRVFVEIFDEEASKCVNAKWLAQGTIYPDVIESAGSATGKAHVIKSHHNVGGLPDDMELGLVEPLRELFKDEVRKIGLELGLPYDMLYRHPFPGPGLGVRVLGEVKKEYCDLLRRADAIFIEELHRADLYNKVSQAFTVFLPVRSVGVMGDGRKYDWVVSLRAVETIDFMTAHWAHLPYDFLGRVSNRIINEVDGISRVVYDISGKPPATIEWE</sequence>
<accession>A1S856</accession>
<organism>
    <name type="scientific">Shewanella amazonensis (strain ATCC BAA-1098 / SB2B)</name>
    <dbReference type="NCBI Taxonomy" id="326297"/>
    <lineage>
        <taxon>Bacteria</taxon>
        <taxon>Pseudomonadati</taxon>
        <taxon>Pseudomonadota</taxon>
        <taxon>Gammaproteobacteria</taxon>
        <taxon>Alteromonadales</taxon>
        <taxon>Shewanellaceae</taxon>
        <taxon>Shewanella</taxon>
    </lineage>
</organism>
<protein>
    <recommendedName>
        <fullName evidence="1">GMP synthase [glutamine-hydrolyzing]</fullName>
        <ecNumber evidence="1">6.3.5.2</ecNumber>
    </recommendedName>
    <alternativeName>
        <fullName evidence="1">GMP synthetase</fullName>
    </alternativeName>
    <alternativeName>
        <fullName evidence="1">Glutamine amidotransferase</fullName>
    </alternativeName>
</protein>
<name>GUAA_SHEAM</name>
<dbReference type="EC" id="6.3.5.2" evidence="1"/>
<dbReference type="EMBL" id="CP000507">
    <property type="protein sequence ID" value="ABM00563.1"/>
    <property type="molecule type" value="Genomic_DNA"/>
</dbReference>
<dbReference type="RefSeq" id="WP_011760470.1">
    <property type="nucleotide sequence ID" value="NC_008700.1"/>
</dbReference>
<dbReference type="SMR" id="A1S856"/>
<dbReference type="STRING" id="326297.Sama_2358"/>
<dbReference type="MEROPS" id="C26.957"/>
<dbReference type="KEGG" id="saz:Sama_2358"/>
<dbReference type="eggNOG" id="COG0518">
    <property type="taxonomic scope" value="Bacteria"/>
</dbReference>
<dbReference type="eggNOG" id="COG0519">
    <property type="taxonomic scope" value="Bacteria"/>
</dbReference>
<dbReference type="HOGENOM" id="CLU_014340_0_5_6"/>
<dbReference type="OrthoDB" id="9802219at2"/>
<dbReference type="UniPathway" id="UPA00189">
    <property type="reaction ID" value="UER00296"/>
</dbReference>
<dbReference type="Proteomes" id="UP000009175">
    <property type="component" value="Chromosome"/>
</dbReference>
<dbReference type="GO" id="GO:0005829">
    <property type="term" value="C:cytosol"/>
    <property type="evidence" value="ECO:0007669"/>
    <property type="project" value="TreeGrafter"/>
</dbReference>
<dbReference type="GO" id="GO:0005524">
    <property type="term" value="F:ATP binding"/>
    <property type="evidence" value="ECO:0007669"/>
    <property type="project" value="UniProtKB-UniRule"/>
</dbReference>
<dbReference type="GO" id="GO:0003921">
    <property type="term" value="F:GMP synthase activity"/>
    <property type="evidence" value="ECO:0007669"/>
    <property type="project" value="InterPro"/>
</dbReference>
<dbReference type="CDD" id="cd01742">
    <property type="entry name" value="GATase1_GMP_Synthase"/>
    <property type="match status" value="1"/>
</dbReference>
<dbReference type="CDD" id="cd01997">
    <property type="entry name" value="GMP_synthase_C"/>
    <property type="match status" value="1"/>
</dbReference>
<dbReference type="FunFam" id="3.30.300.10:FF:000002">
    <property type="entry name" value="GMP synthase [glutamine-hydrolyzing]"/>
    <property type="match status" value="1"/>
</dbReference>
<dbReference type="FunFam" id="3.40.50.620:FF:000001">
    <property type="entry name" value="GMP synthase [glutamine-hydrolyzing]"/>
    <property type="match status" value="1"/>
</dbReference>
<dbReference type="FunFam" id="3.40.50.880:FF:000001">
    <property type="entry name" value="GMP synthase [glutamine-hydrolyzing]"/>
    <property type="match status" value="1"/>
</dbReference>
<dbReference type="Gene3D" id="3.30.300.10">
    <property type="match status" value="1"/>
</dbReference>
<dbReference type="Gene3D" id="3.40.50.880">
    <property type="match status" value="1"/>
</dbReference>
<dbReference type="Gene3D" id="3.40.50.620">
    <property type="entry name" value="HUPs"/>
    <property type="match status" value="1"/>
</dbReference>
<dbReference type="HAMAP" id="MF_00344">
    <property type="entry name" value="GMP_synthase"/>
    <property type="match status" value="1"/>
</dbReference>
<dbReference type="InterPro" id="IPR029062">
    <property type="entry name" value="Class_I_gatase-like"/>
</dbReference>
<dbReference type="InterPro" id="IPR017926">
    <property type="entry name" value="GATASE"/>
</dbReference>
<dbReference type="InterPro" id="IPR001674">
    <property type="entry name" value="GMP_synth_C"/>
</dbReference>
<dbReference type="InterPro" id="IPR004739">
    <property type="entry name" value="GMP_synth_GATase"/>
</dbReference>
<dbReference type="InterPro" id="IPR022955">
    <property type="entry name" value="GMP_synthase"/>
</dbReference>
<dbReference type="InterPro" id="IPR025777">
    <property type="entry name" value="GMPS_ATP_PPase_dom"/>
</dbReference>
<dbReference type="InterPro" id="IPR022310">
    <property type="entry name" value="NAD/GMP_synthase"/>
</dbReference>
<dbReference type="InterPro" id="IPR014729">
    <property type="entry name" value="Rossmann-like_a/b/a_fold"/>
</dbReference>
<dbReference type="NCBIfam" id="TIGR00884">
    <property type="entry name" value="guaA_Cterm"/>
    <property type="match status" value="1"/>
</dbReference>
<dbReference type="NCBIfam" id="TIGR00888">
    <property type="entry name" value="guaA_Nterm"/>
    <property type="match status" value="1"/>
</dbReference>
<dbReference type="NCBIfam" id="NF000848">
    <property type="entry name" value="PRK00074.1"/>
    <property type="match status" value="1"/>
</dbReference>
<dbReference type="PANTHER" id="PTHR11922:SF2">
    <property type="entry name" value="GMP SYNTHASE [GLUTAMINE-HYDROLYZING]"/>
    <property type="match status" value="1"/>
</dbReference>
<dbReference type="PANTHER" id="PTHR11922">
    <property type="entry name" value="GMP SYNTHASE-RELATED"/>
    <property type="match status" value="1"/>
</dbReference>
<dbReference type="Pfam" id="PF00117">
    <property type="entry name" value="GATase"/>
    <property type="match status" value="1"/>
</dbReference>
<dbReference type="Pfam" id="PF00958">
    <property type="entry name" value="GMP_synt_C"/>
    <property type="match status" value="1"/>
</dbReference>
<dbReference type="Pfam" id="PF02540">
    <property type="entry name" value="NAD_synthase"/>
    <property type="match status" value="1"/>
</dbReference>
<dbReference type="PRINTS" id="PR00097">
    <property type="entry name" value="ANTSNTHASEII"/>
</dbReference>
<dbReference type="PRINTS" id="PR00096">
    <property type="entry name" value="GATASE"/>
</dbReference>
<dbReference type="SUPFAM" id="SSF52402">
    <property type="entry name" value="Adenine nucleotide alpha hydrolases-like"/>
    <property type="match status" value="1"/>
</dbReference>
<dbReference type="SUPFAM" id="SSF52317">
    <property type="entry name" value="Class I glutamine amidotransferase-like"/>
    <property type="match status" value="1"/>
</dbReference>
<dbReference type="SUPFAM" id="SSF54810">
    <property type="entry name" value="GMP synthetase C-terminal dimerisation domain"/>
    <property type="match status" value="1"/>
</dbReference>
<dbReference type="PROSITE" id="PS51273">
    <property type="entry name" value="GATASE_TYPE_1"/>
    <property type="match status" value="1"/>
</dbReference>
<dbReference type="PROSITE" id="PS51553">
    <property type="entry name" value="GMPS_ATP_PPASE"/>
    <property type="match status" value="1"/>
</dbReference>
<reference key="1">
    <citation type="submission" date="2006-12" db="EMBL/GenBank/DDBJ databases">
        <title>Complete sequence of Shewanella amazonensis SB2B.</title>
        <authorList>
            <consortium name="US DOE Joint Genome Institute"/>
            <person name="Copeland A."/>
            <person name="Lucas S."/>
            <person name="Lapidus A."/>
            <person name="Barry K."/>
            <person name="Detter J.C."/>
            <person name="Glavina del Rio T."/>
            <person name="Hammon N."/>
            <person name="Israni S."/>
            <person name="Dalin E."/>
            <person name="Tice H."/>
            <person name="Pitluck S."/>
            <person name="Munk A.C."/>
            <person name="Brettin T."/>
            <person name="Bruce D."/>
            <person name="Han C."/>
            <person name="Tapia R."/>
            <person name="Gilna P."/>
            <person name="Schmutz J."/>
            <person name="Larimer F."/>
            <person name="Land M."/>
            <person name="Hauser L."/>
            <person name="Kyrpides N."/>
            <person name="Mikhailova N."/>
            <person name="Fredrickson J."/>
            <person name="Richardson P."/>
        </authorList>
    </citation>
    <scope>NUCLEOTIDE SEQUENCE [LARGE SCALE GENOMIC DNA]</scope>
    <source>
        <strain>ATCC BAA-1098 / SB2B</strain>
    </source>
</reference>
<feature type="chain" id="PRO_1000120397" description="GMP synthase [glutamine-hydrolyzing]">
    <location>
        <begin position="1"/>
        <end position="525"/>
    </location>
</feature>
<feature type="domain" description="Glutamine amidotransferase type-1" evidence="1">
    <location>
        <begin position="8"/>
        <end position="207"/>
    </location>
</feature>
<feature type="domain" description="GMPS ATP-PPase" evidence="1">
    <location>
        <begin position="208"/>
        <end position="400"/>
    </location>
</feature>
<feature type="active site" description="Nucleophile" evidence="1">
    <location>
        <position position="85"/>
    </location>
</feature>
<feature type="active site" evidence="1">
    <location>
        <position position="181"/>
    </location>
</feature>
<feature type="active site" evidence="1">
    <location>
        <position position="183"/>
    </location>
</feature>
<feature type="binding site" evidence="1">
    <location>
        <begin position="235"/>
        <end position="241"/>
    </location>
    <ligand>
        <name>ATP</name>
        <dbReference type="ChEBI" id="CHEBI:30616"/>
    </ligand>
</feature>
<comment type="function">
    <text evidence="1">Catalyzes the synthesis of GMP from XMP.</text>
</comment>
<comment type="catalytic activity">
    <reaction evidence="1">
        <text>XMP + L-glutamine + ATP + H2O = GMP + L-glutamate + AMP + diphosphate + 2 H(+)</text>
        <dbReference type="Rhea" id="RHEA:11680"/>
        <dbReference type="ChEBI" id="CHEBI:15377"/>
        <dbReference type="ChEBI" id="CHEBI:15378"/>
        <dbReference type="ChEBI" id="CHEBI:29985"/>
        <dbReference type="ChEBI" id="CHEBI:30616"/>
        <dbReference type="ChEBI" id="CHEBI:33019"/>
        <dbReference type="ChEBI" id="CHEBI:57464"/>
        <dbReference type="ChEBI" id="CHEBI:58115"/>
        <dbReference type="ChEBI" id="CHEBI:58359"/>
        <dbReference type="ChEBI" id="CHEBI:456215"/>
        <dbReference type="EC" id="6.3.5.2"/>
    </reaction>
</comment>
<comment type="pathway">
    <text evidence="1">Purine metabolism; GMP biosynthesis; GMP from XMP (L-Gln route): step 1/1.</text>
</comment>
<comment type="subunit">
    <text evidence="1">Homodimer.</text>
</comment>
<gene>
    <name evidence="1" type="primary">guaA</name>
    <name type="ordered locus">Sama_2358</name>
</gene>